<feature type="chain" id="PRO_0000160298" description="ATP-dependent Clp protease ATP-binding subunit ClpX">
    <location>
        <begin position="1"/>
        <end position="436"/>
    </location>
</feature>
<feature type="domain" description="ClpX-type ZB" evidence="2">
    <location>
        <begin position="1"/>
        <end position="52"/>
    </location>
</feature>
<feature type="region of interest" description="Disordered" evidence="3">
    <location>
        <begin position="407"/>
        <end position="436"/>
    </location>
</feature>
<feature type="binding site" evidence="2">
    <location>
        <position position="11"/>
    </location>
    <ligand>
        <name>Zn(2+)</name>
        <dbReference type="ChEBI" id="CHEBI:29105"/>
    </ligand>
</feature>
<feature type="binding site" evidence="2">
    <location>
        <position position="14"/>
    </location>
    <ligand>
        <name>Zn(2+)</name>
        <dbReference type="ChEBI" id="CHEBI:29105"/>
    </ligand>
</feature>
<feature type="binding site" evidence="2">
    <location>
        <position position="33"/>
    </location>
    <ligand>
        <name>Zn(2+)</name>
        <dbReference type="ChEBI" id="CHEBI:29105"/>
    </ligand>
</feature>
<feature type="binding site" evidence="2">
    <location>
        <position position="36"/>
    </location>
    <ligand>
        <name>Zn(2+)</name>
        <dbReference type="ChEBI" id="CHEBI:29105"/>
    </ligand>
</feature>
<feature type="binding site" evidence="1">
    <location>
        <begin position="120"/>
        <end position="127"/>
    </location>
    <ligand>
        <name>ATP</name>
        <dbReference type="ChEBI" id="CHEBI:30616"/>
    </ligand>
</feature>
<keyword id="KW-0067">ATP-binding</keyword>
<keyword id="KW-0143">Chaperone</keyword>
<keyword id="KW-0479">Metal-binding</keyword>
<keyword id="KW-0547">Nucleotide-binding</keyword>
<keyword id="KW-0862">Zinc</keyword>
<dbReference type="EMBL" id="CR543861">
    <property type="protein sequence ID" value="CAG67461.1"/>
    <property type="molecule type" value="Genomic_DNA"/>
</dbReference>
<dbReference type="RefSeq" id="WP_004920068.1">
    <property type="nucleotide sequence ID" value="NC_005966.1"/>
</dbReference>
<dbReference type="SMR" id="Q6FEP7"/>
<dbReference type="STRING" id="202950.GCA_001485005_00773"/>
<dbReference type="GeneID" id="45233014"/>
<dbReference type="KEGG" id="aci:ACIAD0535"/>
<dbReference type="eggNOG" id="COG1219">
    <property type="taxonomic scope" value="Bacteria"/>
</dbReference>
<dbReference type="HOGENOM" id="CLU_014218_8_2_6"/>
<dbReference type="OrthoDB" id="9804062at2"/>
<dbReference type="BioCyc" id="ASP62977:ACIAD_RS02430-MONOMER"/>
<dbReference type="Proteomes" id="UP000000430">
    <property type="component" value="Chromosome"/>
</dbReference>
<dbReference type="GO" id="GO:0009376">
    <property type="term" value="C:HslUV protease complex"/>
    <property type="evidence" value="ECO:0007669"/>
    <property type="project" value="TreeGrafter"/>
</dbReference>
<dbReference type="GO" id="GO:0005524">
    <property type="term" value="F:ATP binding"/>
    <property type="evidence" value="ECO:0007669"/>
    <property type="project" value="UniProtKB-UniRule"/>
</dbReference>
<dbReference type="GO" id="GO:0016887">
    <property type="term" value="F:ATP hydrolysis activity"/>
    <property type="evidence" value="ECO:0007669"/>
    <property type="project" value="InterPro"/>
</dbReference>
<dbReference type="GO" id="GO:0140662">
    <property type="term" value="F:ATP-dependent protein folding chaperone"/>
    <property type="evidence" value="ECO:0007669"/>
    <property type="project" value="InterPro"/>
</dbReference>
<dbReference type="GO" id="GO:0046983">
    <property type="term" value="F:protein dimerization activity"/>
    <property type="evidence" value="ECO:0007669"/>
    <property type="project" value="InterPro"/>
</dbReference>
<dbReference type="GO" id="GO:0051082">
    <property type="term" value="F:unfolded protein binding"/>
    <property type="evidence" value="ECO:0007669"/>
    <property type="project" value="UniProtKB-UniRule"/>
</dbReference>
<dbReference type="GO" id="GO:0008270">
    <property type="term" value="F:zinc ion binding"/>
    <property type="evidence" value="ECO:0007669"/>
    <property type="project" value="InterPro"/>
</dbReference>
<dbReference type="GO" id="GO:0051301">
    <property type="term" value="P:cell division"/>
    <property type="evidence" value="ECO:0007669"/>
    <property type="project" value="TreeGrafter"/>
</dbReference>
<dbReference type="GO" id="GO:0051603">
    <property type="term" value="P:proteolysis involved in protein catabolic process"/>
    <property type="evidence" value="ECO:0007669"/>
    <property type="project" value="TreeGrafter"/>
</dbReference>
<dbReference type="CDD" id="cd19497">
    <property type="entry name" value="RecA-like_ClpX"/>
    <property type="match status" value="1"/>
</dbReference>
<dbReference type="FunFam" id="1.10.8.60:FF:000002">
    <property type="entry name" value="ATP-dependent Clp protease ATP-binding subunit ClpX"/>
    <property type="match status" value="1"/>
</dbReference>
<dbReference type="FunFam" id="3.40.50.300:FF:000005">
    <property type="entry name" value="ATP-dependent Clp protease ATP-binding subunit ClpX"/>
    <property type="match status" value="1"/>
</dbReference>
<dbReference type="Gene3D" id="1.10.8.60">
    <property type="match status" value="1"/>
</dbReference>
<dbReference type="Gene3D" id="6.20.220.10">
    <property type="entry name" value="ClpX chaperone, C4-type zinc finger domain"/>
    <property type="match status" value="1"/>
</dbReference>
<dbReference type="Gene3D" id="3.40.50.300">
    <property type="entry name" value="P-loop containing nucleotide triphosphate hydrolases"/>
    <property type="match status" value="1"/>
</dbReference>
<dbReference type="HAMAP" id="MF_00175">
    <property type="entry name" value="ClpX"/>
    <property type="match status" value="1"/>
</dbReference>
<dbReference type="InterPro" id="IPR003593">
    <property type="entry name" value="AAA+_ATPase"/>
</dbReference>
<dbReference type="InterPro" id="IPR050052">
    <property type="entry name" value="ATP-dep_Clp_protease_ClpX"/>
</dbReference>
<dbReference type="InterPro" id="IPR003959">
    <property type="entry name" value="ATPase_AAA_core"/>
</dbReference>
<dbReference type="InterPro" id="IPR019489">
    <property type="entry name" value="Clp_ATPase_C"/>
</dbReference>
<dbReference type="InterPro" id="IPR004487">
    <property type="entry name" value="Clp_protease_ATP-bd_su_ClpX"/>
</dbReference>
<dbReference type="InterPro" id="IPR046425">
    <property type="entry name" value="ClpX_bact"/>
</dbReference>
<dbReference type="InterPro" id="IPR027417">
    <property type="entry name" value="P-loop_NTPase"/>
</dbReference>
<dbReference type="InterPro" id="IPR010603">
    <property type="entry name" value="Znf_CppX_C4"/>
</dbReference>
<dbReference type="InterPro" id="IPR038366">
    <property type="entry name" value="Znf_CppX_C4_sf"/>
</dbReference>
<dbReference type="NCBIfam" id="TIGR00382">
    <property type="entry name" value="clpX"/>
    <property type="match status" value="1"/>
</dbReference>
<dbReference type="NCBIfam" id="NF003745">
    <property type="entry name" value="PRK05342.1"/>
    <property type="match status" value="1"/>
</dbReference>
<dbReference type="PANTHER" id="PTHR48102:SF7">
    <property type="entry name" value="ATP-DEPENDENT CLP PROTEASE ATP-BINDING SUBUNIT CLPX-LIKE, MITOCHONDRIAL"/>
    <property type="match status" value="1"/>
</dbReference>
<dbReference type="PANTHER" id="PTHR48102">
    <property type="entry name" value="ATP-DEPENDENT CLP PROTEASE ATP-BINDING SUBUNIT CLPX-LIKE, MITOCHONDRIAL-RELATED"/>
    <property type="match status" value="1"/>
</dbReference>
<dbReference type="Pfam" id="PF07724">
    <property type="entry name" value="AAA_2"/>
    <property type="match status" value="1"/>
</dbReference>
<dbReference type="Pfam" id="PF10431">
    <property type="entry name" value="ClpB_D2-small"/>
    <property type="match status" value="1"/>
</dbReference>
<dbReference type="Pfam" id="PF06689">
    <property type="entry name" value="zf-C4_ClpX"/>
    <property type="match status" value="1"/>
</dbReference>
<dbReference type="SMART" id="SM00382">
    <property type="entry name" value="AAA"/>
    <property type="match status" value="1"/>
</dbReference>
<dbReference type="SMART" id="SM01086">
    <property type="entry name" value="ClpB_D2-small"/>
    <property type="match status" value="1"/>
</dbReference>
<dbReference type="SMART" id="SM00994">
    <property type="entry name" value="zf-C4_ClpX"/>
    <property type="match status" value="1"/>
</dbReference>
<dbReference type="SUPFAM" id="SSF57716">
    <property type="entry name" value="Glucocorticoid receptor-like (DNA-binding domain)"/>
    <property type="match status" value="1"/>
</dbReference>
<dbReference type="SUPFAM" id="SSF52540">
    <property type="entry name" value="P-loop containing nucleoside triphosphate hydrolases"/>
    <property type="match status" value="1"/>
</dbReference>
<dbReference type="PROSITE" id="PS51902">
    <property type="entry name" value="CLPX_ZB"/>
    <property type="match status" value="1"/>
</dbReference>
<accession>Q6FEP7</accession>
<proteinExistence type="inferred from homology"/>
<organism>
    <name type="scientific">Acinetobacter baylyi (strain ATCC 33305 / BD413 / ADP1)</name>
    <dbReference type="NCBI Taxonomy" id="62977"/>
    <lineage>
        <taxon>Bacteria</taxon>
        <taxon>Pseudomonadati</taxon>
        <taxon>Pseudomonadota</taxon>
        <taxon>Gammaproteobacteria</taxon>
        <taxon>Moraxellales</taxon>
        <taxon>Moraxellaceae</taxon>
        <taxon>Acinetobacter</taxon>
    </lineage>
</organism>
<gene>
    <name evidence="1" type="primary">clpX</name>
    <name type="ordered locus">ACIAD0535</name>
</gene>
<reference key="1">
    <citation type="journal article" date="2004" name="Nucleic Acids Res.">
        <title>Unique features revealed by the genome sequence of Acinetobacter sp. ADP1, a versatile and naturally transformation competent bacterium.</title>
        <authorList>
            <person name="Barbe V."/>
            <person name="Vallenet D."/>
            <person name="Fonknechten N."/>
            <person name="Kreimeyer A."/>
            <person name="Oztas S."/>
            <person name="Labarre L."/>
            <person name="Cruveiller S."/>
            <person name="Robert C."/>
            <person name="Duprat S."/>
            <person name="Wincker P."/>
            <person name="Ornston L.N."/>
            <person name="Weissenbach J."/>
            <person name="Marliere P."/>
            <person name="Cohen G.N."/>
            <person name="Medigue C."/>
        </authorList>
    </citation>
    <scope>NUCLEOTIDE SEQUENCE [LARGE SCALE GENOMIC DNA]</scope>
    <source>
        <strain>ATCC 33305 / BD413 / ADP1</strain>
    </source>
</reference>
<sequence length="436" mass="48181">MSEHPQGQKHCSFCGKSQAEVGKLIAGENAYICNECVDVCLDLVQTSQQVEAGDWASRDLPKPHEIRAALDQYVIGQDLAKKTLSVAVYNHYKRLKAGQSGHVSKHEVEIAKSNILLIGPTGSGKTLLAQTLARLLDVPFAMADATTLTEAGYVGEDVENIVQKLLQKADYDVEKAQKGIIYIDEIDKITRKSENPSITRDVSGEGVQQALLKMIEGTVASIPPQGGRKHPQQEFIQIDTSNILFICGGAFAGLEKIVQQRHEKGGIGFNAEVKKKDETKKLAELFRQVEPTDLVKFGLIPEFIGRLPVIATLEELDEAALMQILTEPKNALTRQYQSLFQMENVDLVFEESALRAIAKKALERNTGARGLRSIMENVLLETMYDLPSRKDIGTVVVNEAVIRGEAEPEYKKEHTQKKDTHEHNVADLKVIDSKSA</sequence>
<comment type="function">
    <text evidence="1">ATP-dependent specificity component of the Clp protease. It directs the protease to specific substrates. Can perform chaperone functions in the absence of ClpP.</text>
</comment>
<comment type="subunit">
    <text evidence="1">Component of the ClpX-ClpP complex. Forms a hexameric ring that, in the presence of ATP, binds to fourteen ClpP subunits assembled into a disk-like structure with a central cavity, resembling the structure of eukaryotic proteasomes.</text>
</comment>
<comment type="similarity">
    <text evidence="1">Belongs to the ClpX chaperone family.</text>
</comment>
<evidence type="ECO:0000255" key="1">
    <source>
        <dbReference type="HAMAP-Rule" id="MF_00175"/>
    </source>
</evidence>
<evidence type="ECO:0000255" key="2">
    <source>
        <dbReference type="PROSITE-ProRule" id="PRU01250"/>
    </source>
</evidence>
<evidence type="ECO:0000256" key="3">
    <source>
        <dbReference type="SAM" id="MobiDB-lite"/>
    </source>
</evidence>
<protein>
    <recommendedName>
        <fullName evidence="1">ATP-dependent Clp protease ATP-binding subunit ClpX</fullName>
    </recommendedName>
</protein>
<name>CLPX_ACIAD</name>